<feature type="chain" id="PRO_0000108087" description="Quaternary ammonium compound-resistance protein QacF">
    <location>
        <begin position="1"/>
        <end position="110"/>
    </location>
</feature>
<feature type="transmembrane region" description="Helical" evidence="1">
    <location>
        <begin position="1"/>
        <end position="21"/>
    </location>
</feature>
<feature type="transmembrane region" description="Helical" evidence="1">
    <location>
        <begin position="31"/>
        <end position="51"/>
    </location>
</feature>
<feature type="transmembrane region" description="Helical" evidence="1">
    <location>
        <begin position="58"/>
        <end position="78"/>
    </location>
</feature>
<feature type="transmembrane region" description="Helical" evidence="1">
    <location>
        <begin position="85"/>
        <end position="105"/>
    </location>
</feature>
<keyword id="KW-1003">Cell membrane</keyword>
<keyword id="KW-0472">Membrane</keyword>
<keyword id="KW-0614">Plasmid</keyword>
<keyword id="KW-0812">Transmembrane</keyword>
<keyword id="KW-1133">Transmembrane helix</keyword>
<keyword id="KW-0813">Transport</keyword>
<keyword id="KW-0814">Transposable element</keyword>
<organism>
    <name type="scientific">Klebsiella aerogenes</name>
    <name type="common">Enterobacter aerogenes</name>
    <dbReference type="NCBI Taxonomy" id="548"/>
    <lineage>
        <taxon>Bacteria</taxon>
        <taxon>Pseudomonadati</taxon>
        <taxon>Pseudomonadota</taxon>
        <taxon>Gammaproteobacteria</taxon>
        <taxon>Enterobacterales</taxon>
        <taxon>Enterobacteriaceae</taxon>
        <taxon>Klebsiella/Raoultella group</taxon>
        <taxon>Klebsiella</taxon>
    </lineage>
</organism>
<geneLocation type="plasmid">
    <name>pIP833</name>
</geneLocation>
<name>QACF_KLEAE</name>
<sequence>MKNWIFLAVSIFGEVIATSALKSSHGFTRLVPSVVVVAGYGLAFYFLSLALKSIPVGIAYAVWAGLGIVLVAAIAWIFHGQKLDFWAFIGMGLIVSGVAVLNLLSKVSAH</sequence>
<comment type="function">
    <text>Multidrug exporter. Is implicated for the resistance to bacteriocidal quaternary ammonium compounds.</text>
</comment>
<comment type="subcellular location">
    <subcellularLocation>
        <location evidence="2">Cell membrane</location>
        <topology evidence="2">Multi-pass membrane protein</topology>
    </subcellularLocation>
</comment>
<comment type="similarity">
    <text evidence="2">Belongs to the drug/metabolite transporter (DMT) superfamily. Small multidrug resistance (SMR) (TC 2.A.7.1) family.</text>
</comment>
<evidence type="ECO:0000255" key="1"/>
<evidence type="ECO:0000305" key="2"/>
<reference key="1">
    <citation type="journal article" date="1998" name="Antimicrob. Agents Chemother.">
        <title>Characterization of In40 of Enterobacter aerogenes BM2688, a class 1 integron with two new gene cassettes, cmlA2 and qacF.</title>
        <authorList>
            <person name="Ploy M.-C."/>
            <person name="Courvalin P."/>
            <person name="Lambert T."/>
        </authorList>
    </citation>
    <scope>NUCLEOTIDE SEQUENCE [GENOMIC DNA]</scope>
    <source>
        <strain>BM2688-1</strain>
        <transposon>In40</transposon>
    </source>
</reference>
<proteinExistence type="inferred from homology"/>
<protein>
    <recommendedName>
        <fullName>Quaternary ammonium compound-resistance protein QacF</fullName>
    </recommendedName>
    <alternativeName>
        <fullName>Quaternary ammonium determinant F</fullName>
    </alternativeName>
</protein>
<accession>Q9X2N9</accession>
<gene>
    <name type="primary">qacF</name>
</gene>
<dbReference type="EMBL" id="AF034958">
    <property type="protein sequence ID" value="AAD22143.1"/>
    <property type="molecule type" value="Genomic_DNA"/>
</dbReference>
<dbReference type="SMR" id="Q9X2N9"/>
<dbReference type="GO" id="GO:0005886">
    <property type="term" value="C:plasma membrane"/>
    <property type="evidence" value="ECO:0007669"/>
    <property type="project" value="UniProtKB-SubCell"/>
</dbReference>
<dbReference type="GO" id="GO:0022857">
    <property type="term" value="F:transmembrane transporter activity"/>
    <property type="evidence" value="ECO:0007669"/>
    <property type="project" value="InterPro"/>
</dbReference>
<dbReference type="FunFam" id="1.10.3730.20:FF:000001">
    <property type="entry name" value="Quaternary ammonium compound resistance transporter SugE"/>
    <property type="match status" value="1"/>
</dbReference>
<dbReference type="Gene3D" id="1.10.3730.20">
    <property type="match status" value="1"/>
</dbReference>
<dbReference type="InterPro" id="IPR000390">
    <property type="entry name" value="Small_drug/metabolite_transptr"/>
</dbReference>
<dbReference type="InterPro" id="IPR045324">
    <property type="entry name" value="Small_multidrug_res"/>
</dbReference>
<dbReference type="NCBIfam" id="NF000067">
    <property type="entry name" value="SMR_qac_FL"/>
    <property type="match status" value="1"/>
</dbReference>
<dbReference type="NCBIfam" id="NF033137">
    <property type="entry name" value="SMR_qac_int"/>
    <property type="match status" value="1"/>
</dbReference>
<dbReference type="PANTHER" id="PTHR30561:SF1">
    <property type="entry name" value="MULTIDRUG TRANSPORTER EMRE"/>
    <property type="match status" value="1"/>
</dbReference>
<dbReference type="PANTHER" id="PTHR30561">
    <property type="entry name" value="SMR FAMILY PROTON-DEPENDENT DRUG EFFLUX TRANSPORTER SUGE"/>
    <property type="match status" value="1"/>
</dbReference>
<dbReference type="Pfam" id="PF00893">
    <property type="entry name" value="Multi_Drug_Res"/>
    <property type="match status" value="1"/>
</dbReference>
<dbReference type="SUPFAM" id="SSF103481">
    <property type="entry name" value="Multidrug resistance efflux transporter EmrE"/>
    <property type="match status" value="1"/>
</dbReference>